<comment type="function">
    <text evidence="1">Catalyzes the conversion of inosine 5'-phosphate (IMP) to xanthosine 5'-phosphate (XMP), the first committed and rate-limiting step in the de novo synthesis of guanine nucleotides, and therefore plays an important role in the regulation of cell growth.</text>
</comment>
<comment type="catalytic activity">
    <reaction evidence="1">
        <text>IMP + NAD(+) + H2O = XMP + NADH + H(+)</text>
        <dbReference type="Rhea" id="RHEA:11708"/>
        <dbReference type="ChEBI" id="CHEBI:15377"/>
        <dbReference type="ChEBI" id="CHEBI:15378"/>
        <dbReference type="ChEBI" id="CHEBI:57464"/>
        <dbReference type="ChEBI" id="CHEBI:57540"/>
        <dbReference type="ChEBI" id="CHEBI:57945"/>
        <dbReference type="ChEBI" id="CHEBI:58053"/>
        <dbReference type="EC" id="1.1.1.205"/>
    </reaction>
</comment>
<comment type="cofactor">
    <cofactor evidence="1">
        <name>K(+)</name>
        <dbReference type="ChEBI" id="CHEBI:29103"/>
    </cofactor>
</comment>
<comment type="activity regulation">
    <text evidence="1">Mycophenolic acid (MPA) is a non-competitive inhibitor that prevents formation of the closed enzyme conformation by binding to the same site as the amobile flap. In contrast, mizoribine monophosphate (MZP) is a competitive inhibitor that induces the closed conformation. MPA is a potent inhibitor of mammalian IMPDHs but a poor inhibitor of the bacterial enzymes. MZP is a more potent inhibitor of bacterial IMPDH.</text>
</comment>
<comment type="pathway">
    <text evidence="1">Purine metabolism; XMP biosynthesis via de novo pathway; XMP from IMP: step 1/1.</text>
</comment>
<comment type="subunit">
    <text evidence="1">Homotetramer.</text>
</comment>
<comment type="similarity">
    <text evidence="1">Belongs to the IMPDH/GMPR family.</text>
</comment>
<protein>
    <recommendedName>
        <fullName evidence="1">Inosine-5'-monophosphate dehydrogenase</fullName>
        <shortName evidence="1">IMP dehydrogenase</shortName>
        <shortName evidence="1">IMPD</shortName>
        <shortName evidence="1">IMPDH</shortName>
        <ecNumber evidence="1">1.1.1.205</ecNumber>
    </recommendedName>
</protein>
<gene>
    <name evidence="1" type="primary">guaB</name>
    <name type="ordered locus">PF0285</name>
</gene>
<proteinExistence type="inferred from homology"/>
<name>IMDH_PYRFU</name>
<evidence type="ECO:0000255" key="1">
    <source>
        <dbReference type="HAMAP-Rule" id="MF_01964"/>
    </source>
</evidence>
<feature type="chain" id="PRO_0000093721" description="Inosine-5'-monophosphate dehydrogenase">
    <location>
        <begin position="1"/>
        <end position="485"/>
    </location>
</feature>
<feature type="domain" description="CBS 1" evidence="1">
    <location>
        <begin position="99"/>
        <end position="154"/>
    </location>
</feature>
<feature type="domain" description="CBS 2" evidence="1">
    <location>
        <begin position="156"/>
        <end position="212"/>
    </location>
</feature>
<feature type="active site" description="Thioimidate intermediate" evidence="1">
    <location>
        <position position="301"/>
    </location>
</feature>
<feature type="active site" description="Proton acceptor" evidence="1">
    <location>
        <position position="397"/>
    </location>
</feature>
<feature type="binding site" evidence="1">
    <location>
        <position position="247"/>
    </location>
    <ligand>
        <name>NAD(+)</name>
        <dbReference type="ChEBI" id="CHEBI:57540"/>
    </ligand>
</feature>
<feature type="binding site" evidence="1">
    <location>
        <begin position="294"/>
        <end position="296"/>
    </location>
    <ligand>
        <name>NAD(+)</name>
        <dbReference type="ChEBI" id="CHEBI:57540"/>
    </ligand>
</feature>
<feature type="binding site" description="in other chain" evidence="1">
    <location>
        <position position="296"/>
    </location>
    <ligand>
        <name>K(+)</name>
        <dbReference type="ChEBI" id="CHEBI:29103"/>
        <note>ligand shared between two tetrameric partners</note>
    </ligand>
</feature>
<feature type="binding site" description="in other chain" evidence="1">
    <location>
        <position position="298"/>
    </location>
    <ligand>
        <name>K(+)</name>
        <dbReference type="ChEBI" id="CHEBI:29103"/>
        <note>ligand shared between two tetrameric partners</note>
    </ligand>
</feature>
<feature type="binding site" evidence="1">
    <location>
        <position position="299"/>
    </location>
    <ligand>
        <name>IMP</name>
        <dbReference type="ChEBI" id="CHEBI:58053"/>
    </ligand>
</feature>
<feature type="binding site" description="in other chain" evidence="1">
    <location>
        <position position="301"/>
    </location>
    <ligand>
        <name>K(+)</name>
        <dbReference type="ChEBI" id="CHEBI:29103"/>
        <note>ligand shared between two tetrameric partners</note>
    </ligand>
</feature>
<feature type="binding site" evidence="1">
    <location>
        <begin position="334"/>
        <end position="336"/>
    </location>
    <ligand>
        <name>IMP</name>
        <dbReference type="ChEBI" id="CHEBI:58053"/>
    </ligand>
</feature>
<feature type="binding site" evidence="1">
    <location>
        <begin position="357"/>
        <end position="358"/>
    </location>
    <ligand>
        <name>IMP</name>
        <dbReference type="ChEBI" id="CHEBI:58053"/>
    </ligand>
</feature>
<feature type="binding site" evidence="1">
    <location>
        <begin position="381"/>
        <end position="385"/>
    </location>
    <ligand>
        <name>IMP</name>
        <dbReference type="ChEBI" id="CHEBI:58053"/>
    </ligand>
</feature>
<feature type="binding site" evidence="1">
    <location>
        <position position="412"/>
    </location>
    <ligand>
        <name>IMP</name>
        <dbReference type="ChEBI" id="CHEBI:58053"/>
    </ligand>
</feature>
<feature type="binding site" evidence="1">
    <location>
        <position position="466"/>
    </location>
    <ligand>
        <name>K(+)</name>
        <dbReference type="ChEBI" id="CHEBI:29103"/>
        <note>ligand shared between two tetrameric partners</note>
    </ligand>
</feature>
<feature type="binding site" evidence="1">
    <location>
        <position position="467"/>
    </location>
    <ligand>
        <name>K(+)</name>
        <dbReference type="ChEBI" id="CHEBI:29103"/>
        <note>ligand shared between two tetrameric partners</note>
    </ligand>
</feature>
<feature type="binding site" evidence="1">
    <location>
        <position position="468"/>
    </location>
    <ligand>
        <name>K(+)</name>
        <dbReference type="ChEBI" id="CHEBI:29103"/>
        <note>ligand shared between two tetrameric partners</note>
    </ligand>
</feature>
<sequence>MGKFVEKLENAIRGYTFDDVLLIPQPTEVEPKDVDVSTQITPNVKLNIPILSAAMDTVTEWEMAVAMAREGGLGVIHRNMSIEEQVEQVKRVKRAERFIVEDVITIAPDETIDYALFLMEKHGIDGLPVVEEDRVVGIITKKDIAAREGRTVKELMTREVITVPESVDVEEALKIMMENRIDRLPVVNEDGKLVGLITMSDLVARKKYKNAVRNEKGELLVAAAVSPFDLRRAIELDRAGVDVIVVDTAHAHNLKAIKAMKEMRQKVSADFIVGNIANPKAVDDLTFADAVKVGIGPGSICTTRIVAGVGVPQITAIAMVADRAQEYGLYVIADGGIKYSGDIVKAIAAGADAVMLGNLLAGTKEAPGKEVIINGRKYKQYRGMGSLGAMMKGGAERYYQGGYMKTRKFVPEGVEGVVPYRGTVSEVLYQLVGGLKAGMGYVGARNIKELKEKGEFVIITSAGLRESHPHDIIITNEAPNYPLER</sequence>
<dbReference type="EC" id="1.1.1.205" evidence="1"/>
<dbReference type="EMBL" id="U08814">
    <property type="protein sequence ID" value="AAC44532.1"/>
    <property type="molecule type" value="Genomic_DNA"/>
</dbReference>
<dbReference type="EMBL" id="AE009950">
    <property type="protein sequence ID" value="AAL80409.1"/>
    <property type="molecule type" value="Genomic_DNA"/>
</dbReference>
<dbReference type="PIR" id="JC4998">
    <property type="entry name" value="JC4998"/>
</dbReference>
<dbReference type="RefSeq" id="WP_011011399.1">
    <property type="nucleotide sequence ID" value="NZ_CP023154.1"/>
</dbReference>
<dbReference type="SMR" id="P42851"/>
<dbReference type="STRING" id="186497.PF0285"/>
<dbReference type="PaxDb" id="186497-PF0285"/>
<dbReference type="GeneID" id="41712074"/>
<dbReference type="KEGG" id="pfu:PF0285"/>
<dbReference type="PATRIC" id="fig|186497.12.peg.297"/>
<dbReference type="eggNOG" id="arCOG00612">
    <property type="taxonomic scope" value="Archaea"/>
</dbReference>
<dbReference type="HOGENOM" id="CLU_022552_2_1_2"/>
<dbReference type="OrthoDB" id="21361at2157"/>
<dbReference type="PhylomeDB" id="P42851"/>
<dbReference type="BRENDA" id="1.1.1.205">
    <property type="organism ID" value="5243"/>
</dbReference>
<dbReference type="UniPathway" id="UPA00601">
    <property type="reaction ID" value="UER00295"/>
</dbReference>
<dbReference type="Proteomes" id="UP000001013">
    <property type="component" value="Chromosome"/>
</dbReference>
<dbReference type="GO" id="GO:0003938">
    <property type="term" value="F:IMP dehydrogenase activity"/>
    <property type="evidence" value="ECO:0007669"/>
    <property type="project" value="UniProtKB-UniRule"/>
</dbReference>
<dbReference type="GO" id="GO:0046872">
    <property type="term" value="F:metal ion binding"/>
    <property type="evidence" value="ECO:0007669"/>
    <property type="project" value="UniProtKB-UniRule"/>
</dbReference>
<dbReference type="GO" id="GO:0000166">
    <property type="term" value="F:nucleotide binding"/>
    <property type="evidence" value="ECO:0007669"/>
    <property type="project" value="UniProtKB-UniRule"/>
</dbReference>
<dbReference type="GO" id="GO:0006177">
    <property type="term" value="P:GMP biosynthetic process"/>
    <property type="evidence" value="ECO:0007669"/>
    <property type="project" value="UniProtKB-UniRule"/>
</dbReference>
<dbReference type="GO" id="GO:0006183">
    <property type="term" value="P:GTP biosynthetic process"/>
    <property type="evidence" value="ECO:0007669"/>
    <property type="project" value="TreeGrafter"/>
</dbReference>
<dbReference type="CDD" id="cd04601">
    <property type="entry name" value="CBS_pair_IMPDH"/>
    <property type="match status" value="1"/>
</dbReference>
<dbReference type="CDD" id="cd00381">
    <property type="entry name" value="IMPDH"/>
    <property type="match status" value="1"/>
</dbReference>
<dbReference type="FunFam" id="3.20.20.70:FF:000003">
    <property type="entry name" value="GMP reductase"/>
    <property type="match status" value="1"/>
</dbReference>
<dbReference type="Gene3D" id="3.20.20.70">
    <property type="entry name" value="Aldolase class I"/>
    <property type="match status" value="1"/>
</dbReference>
<dbReference type="HAMAP" id="MF_01964">
    <property type="entry name" value="IMPDH"/>
    <property type="match status" value="1"/>
</dbReference>
<dbReference type="InterPro" id="IPR013785">
    <property type="entry name" value="Aldolase_TIM"/>
</dbReference>
<dbReference type="InterPro" id="IPR000644">
    <property type="entry name" value="CBS_dom"/>
</dbReference>
<dbReference type="InterPro" id="IPR046342">
    <property type="entry name" value="CBS_dom_sf"/>
</dbReference>
<dbReference type="InterPro" id="IPR005990">
    <property type="entry name" value="IMP_DH"/>
</dbReference>
<dbReference type="InterPro" id="IPR015875">
    <property type="entry name" value="IMP_DH/GMP_Rdtase_CS"/>
</dbReference>
<dbReference type="InterPro" id="IPR001093">
    <property type="entry name" value="IMP_DH_GMPRt"/>
</dbReference>
<dbReference type="NCBIfam" id="TIGR01302">
    <property type="entry name" value="IMP_dehydrog"/>
    <property type="match status" value="1"/>
</dbReference>
<dbReference type="PANTHER" id="PTHR11911:SF111">
    <property type="entry name" value="INOSINE-5'-MONOPHOSPHATE DEHYDROGENASE"/>
    <property type="match status" value="1"/>
</dbReference>
<dbReference type="PANTHER" id="PTHR11911">
    <property type="entry name" value="INOSINE-5-MONOPHOSPHATE DEHYDROGENASE RELATED"/>
    <property type="match status" value="1"/>
</dbReference>
<dbReference type="Pfam" id="PF00571">
    <property type="entry name" value="CBS"/>
    <property type="match status" value="2"/>
</dbReference>
<dbReference type="Pfam" id="PF00478">
    <property type="entry name" value="IMPDH"/>
    <property type="match status" value="1"/>
</dbReference>
<dbReference type="PIRSF" id="PIRSF000130">
    <property type="entry name" value="IMPDH"/>
    <property type="match status" value="1"/>
</dbReference>
<dbReference type="SMART" id="SM00116">
    <property type="entry name" value="CBS"/>
    <property type="match status" value="2"/>
</dbReference>
<dbReference type="SMART" id="SM01240">
    <property type="entry name" value="IMPDH"/>
    <property type="match status" value="1"/>
</dbReference>
<dbReference type="SUPFAM" id="SSF54631">
    <property type="entry name" value="CBS-domain pair"/>
    <property type="match status" value="1"/>
</dbReference>
<dbReference type="SUPFAM" id="SSF51412">
    <property type="entry name" value="Inosine monophosphate dehydrogenase (IMPDH)"/>
    <property type="match status" value="1"/>
</dbReference>
<dbReference type="PROSITE" id="PS51371">
    <property type="entry name" value="CBS"/>
    <property type="match status" value="2"/>
</dbReference>
<dbReference type="PROSITE" id="PS00487">
    <property type="entry name" value="IMP_DH_GMP_RED"/>
    <property type="match status" value="1"/>
</dbReference>
<accession>P42851</accession>
<reference key="1">
    <citation type="journal article" date="1996" name="Gene">
        <title>Cloning, characterization and sequence comparison of the gene coding for IMP dehydrogenase from Pyrococcus furiosus.</title>
        <authorList>
            <person name="Collart F.R."/>
            <person name="Osipiuk J."/>
            <person name="Trent J."/>
            <person name="Olsen G.J."/>
            <person name="Huberman E."/>
        </authorList>
    </citation>
    <scope>NUCLEOTIDE SEQUENCE [GENOMIC DNA]</scope>
</reference>
<reference key="2">
    <citation type="journal article" date="1999" name="Genetics">
        <title>Divergence of the hyperthermophilic archaea Pyrococcus furiosus and P. horikoshii inferred from complete genomic sequences.</title>
        <authorList>
            <person name="Maeder D.L."/>
            <person name="Weiss R.B."/>
            <person name="Dunn D.M."/>
            <person name="Cherry J.L."/>
            <person name="Gonzalez J.M."/>
            <person name="DiRuggiero J."/>
            <person name="Robb F.T."/>
        </authorList>
    </citation>
    <scope>NUCLEOTIDE SEQUENCE [LARGE SCALE GENOMIC DNA]</scope>
    <source>
        <strain>ATCC 43587 / DSM 3638 / JCM 8422 / Vc1</strain>
    </source>
</reference>
<organism>
    <name type="scientific">Pyrococcus furiosus (strain ATCC 43587 / DSM 3638 / JCM 8422 / Vc1)</name>
    <dbReference type="NCBI Taxonomy" id="186497"/>
    <lineage>
        <taxon>Archaea</taxon>
        <taxon>Methanobacteriati</taxon>
        <taxon>Methanobacteriota</taxon>
        <taxon>Thermococci</taxon>
        <taxon>Thermococcales</taxon>
        <taxon>Thermococcaceae</taxon>
        <taxon>Pyrococcus</taxon>
    </lineage>
</organism>
<keyword id="KW-0129">CBS domain</keyword>
<keyword id="KW-0332">GMP biosynthesis</keyword>
<keyword id="KW-0479">Metal-binding</keyword>
<keyword id="KW-0520">NAD</keyword>
<keyword id="KW-0560">Oxidoreductase</keyword>
<keyword id="KW-0630">Potassium</keyword>
<keyword id="KW-0658">Purine biosynthesis</keyword>
<keyword id="KW-1185">Reference proteome</keyword>
<keyword id="KW-0677">Repeat</keyword>